<reference key="1">
    <citation type="journal article" date="2004" name="Proc. Natl. Acad. Sci. U.S.A.">
        <title>Genome sequence of the enterobacterial phytopathogen Erwinia carotovora subsp. atroseptica and characterization of virulence factors.</title>
        <authorList>
            <person name="Bell K.S."/>
            <person name="Sebaihia M."/>
            <person name="Pritchard L."/>
            <person name="Holden M.T.G."/>
            <person name="Hyman L.J."/>
            <person name="Holeva M.C."/>
            <person name="Thomson N.R."/>
            <person name="Bentley S.D."/>
            <person name="Churcher L.J.C."/>
            <person name="Mungall K."/>
            <person name="Atkin R."/>
            <person name="Bason N."/>
            <person name="Brooks K."/>
            <person name="Chillingworth T."/>
            <person name="Clark K."/>
            <person name="Doggett J."/>
            <person name="Fraser A."/>
            <person name="Hance Z."/>
            <person name="Hauser H."/>
            <person name="Jagels K."/>
            <person name="Moule S."/>
            <person name="Norbertczak H."/>
            <person name="Ormond D."/>
            <person name="Price C."/>
            <person name="Quail M.A."/>
            <person name="Sanders M."/>
            <person name="Walker D."/>
            <person name="Whitehead S."/>
            <person name="Salmond G.P.C."/>
            <person name="Birch P.R.J."/>
            <person name="Parkhill J."/>
            <person name="Toth I.K."/>
        </authorList>
    </citation>
    <scope>NUCLEOTIDE SEQUENCE [LARGE SCALE GENOMIC DNA]</scope>
    <source>
        <strain>SCRI 1043 / ATCC BAA-672</strain>
    </source>
</reference>
<feature type="chain" id="PRO_0000297859" description="Flap endonuclease Xni">
    <location>
        <begin position="1"/>
        <end position="260"/>
    </location>
</feature>
<feature type="domain" description="5'-3' exonuclease" evidence="1">
    <location>
        <begin position="160"/>
        <end position="250"/>
    </location>
</feature>
<feature type="region of interest" description="Interaction with DNA" evidence="1">
    <location>
        <begin position="184"/>
        <end position="189"/>
    </location>
</feature>
<feature type="binding site" evidence="1">
    <location>
        <position position="104"/>
    </location>
    <ligand>
        <name>Mg(2+)</name>
        <dbReference type="ChEBI" id="CHEBI:18420"/>
    </ligand>
</feature>
<feature type="binding site" evidence="1">
    <location>
        <position position="171"/>
    </location>
    <ligand>
        <name>K(+)</name>
        <dbReference type="ChEBI" id="CHEBI:29103"/>
    </ligand>
</feature>
<feature type="binding site" evidence="1">
    <location>
        <position position="172"/>
    </location>
    <ligand>
        <name>K(+)</name>
        <dbReference type="ChEBI" id="CHEBI:29103"/>
    </ligand>
</feature>
<feature type="binding site" evidence="1">
    <location>
        <position position="180"/>
    </location>
    <ligand>
        <name>K(+)</name>
        <dbReference type="ChEBI" id="CHEBI:29103"/>
    </ligand>
</feature>
<feature type="binding site" evidence="1">
    <location>
        <position position="182"/>
    </location>
    <ligand>
        <name>K(+)</name>
        <dbReference type="ChEBI" id="CHEBI:29103"/>
    </ligand>
</feature>
<feature type="binding site" evidence="1">
    <location>
        <position position="185"/>
    </location>
    <ligand>
        <name>K(+)</name>
        <dbReference type="ChEBI" id="CHEBI:29103"/>
    </ligand>
</feature>
<organism>
    <name type="scientific">Pectobacterium atrosepticum (strain SCRI 1043 / ATCC BAA-672)</name>
    <name type="common">Erwinia carotovora subsp. atroseptica</name>
    <dbReference type="NCBI Taxonomy" id="218491"/>
    <lineage>
        <taxon>Bacteria</taxon>
        <taxon>Pseudomonadati</taxon>
        <taxon>Pseudomonadota</taxon>
        <taxon>Gammaproteobacteria</taxon>
        <taxon>Enterobacterales</taxon>
        <taxon>Pectobacteriaceae</taxon>
        <taxon>Pectobacterium</taxon>
    </lineage>
</organism>
<gene>
    <name evidence="1" type="primary">xni</name>
    <name evidence="1" type="synonym">ygdG</name>
    <name type="ordered locus">ECA1018</name>
</gene>
<keyword id="KW-0238">DNA-binding</keyword>
<keyword id="KW-0255">Endonuclease</keyword>
<keyword id="KW-0378">Hydrolase</keyword>
<keyword id="KW-0460">Magnesium</keyword>
<keyword id="KW-0479">Metal-binding</keyword>
<keyword id="KW-0540">Nuclease</keyword>
<keyword id="KW-0630">Potassium</keyword>
<keyword id="KW-1185">Reference proteome</keyword>
<name>XNI_PECAS</name>
<evidence type="ECO:0000255" key="1">
    <source>
        <dbReference type="HAMAP-Rule" id="MF_01192"/>
    </source>
</evidence>
<accession>Q6D8F6</accession>
<protein>
    <recommendedName>
        <fullName evidence="1">Flap endonuclease Xni</fullName>
        <shortName evidence="1">FEN</shortName>
        <ecNumber evidence="1">3.1.-.-</ecNumber>
    </recommendedName>
</protein>
<sequence>MPVHLLIVDALNLIRRIHAVQGSPCITACQHALHQLIQNSQPTHAVAVFDDEDRDTSWRHQLLPDYKAGRTPMPDNLKQELPQIKTAFAAVGVESWHSPGNEADDLAATLATKLSSAGHQATIISTDKGYCQLLAPHIQIRDYFQKRWLDLPFIEQEFSVSPQQLTDYWGLAGISSSKIPGVAGIGPKSAAQLLQQAGNLEALYQQLDAVPEKWRKKLEQHKEMALISRQVATLRTDLTLNGNLQQLRLPVQSSTQPQSY</sequence>
<proteinExistence type="inferred from homology"/>
<dbReference type="EC" id="3.1.-.-" evidence="1"/>
<dbReference type="EMBL" id="BX950851">
    <property type="protein sequence ID" value="CAG73929.1"/>
    <property type="molecule type" value="Genomic_DNA"/>
</dbReference>
<dbReference type="RefSeq" id="WP_011092617.1">
    <property type="nucleotide sequence ID" value="NC_004547.2"/>
</dbReference>
<dbReference type="SMR" id="Q6D8F6"/>
<dbReference type="STRING" id="218491.ECA1018"/>
<dbReference type="GeneID" id="57207847"/>
<dbReference type="KEGG" id="eca:ECA1018"/>
<dbReference type="PATRIC" id="fig|218491.5.peg.1026"/>
<dbReference type="eggNOG" id="COG0258">
    <property type="taxonomic scope" value="Bacteria"/>
</dbReference>
<dbReference type="HOGENOM" id="CLU_004675_1_2_6"/>
<dbReference type="OrthoDB" id="8070997at2"/>
<dbReference type="Proteomes" id="UP000007966">
    <property type="component" value="Chromosome"/>
</dbReference>
<dbReference type="GO" id="GO:0008409">
    <property type="term" value="F:5'-3' exonuclease activity"/>
    <property type="evidence" value="ECO:0007669"/>
    <property type="project" value="InterPro"/>
</dbReference>
<dbReference type="GO" id="GO:0017108">
    <property type="term" value="F:5'-flap endonuclease activity"/>
    <property type="evidence" value="ECO:0007669"/>
    <property type="project" value="UniProtKB-UniRule"/>
</dbReference>
<dbReference type="GO" id="GO:0003677">
    <property type="term" value="F:DNA binding"/>
    <property type="evidence" value="ECO:0007669"/>
    <property type="project" value="UniProtKB-UniRule"/>
</dbReference>
<dbReference type="GO" id="GO:0000287">
    <property type="term" value="F:magnesium ion binding"/>
    <property type="evidence" value="ECO:0007669"/>
    <property type="project" value="UniProtKB-UniRule"/>
</dbReference>
<dbReference type="GO" id="GO:0030955">
    <property type="term" value="F:potassium ion binding"/>
    <property type="evidence" value="ECO:0007669"/>
    <property type="project" value="UniProtKB-UniRule"/>
</dbReference>
<dbReference type="GO" id="GO:0033567">
    <property type="term" value="P:DNA replication, Okazaki fragment processing"/>
    <property type="evidence" value="ECO:0007669"/>
    <property type="project" value="UniProtKB-UniRule"/>
</dbReference>
<dbReference type="CDD" id="cd09898">
    <property type="entry name" value="H3TH_53EXO"/>
    <property type="match status" value="1"/>
</dbReference>
<dbReference type="CDD" id="cd09859">
    <property type="entry name" value="PIN_53EXO"/>
    <property type="match status" value="1"/>
</dbReference>
<dbReference type="FunFam" id="1.10.150.20:FF:000003">
    <property type="entry name" value="DNA polymerase I"/>
    <property type="match status" value="1"/>
</dbReference>
<dbReference type="FunFam" id="3.40.50.1010:FF:000011">
    <property type="entry name" value="Flap endonuclease Xni"/>
    <property type="match status" value="1"/>
</dbReference>
<dbReference type="Gene3D" id="1.10.150.20">
    <property type="entry name" value="5' to 3' exonuclease, C-terminal subdomain"/>
    <property type="match status" value="1"/>
</dbReference>
<dbReference type="Gene3D" id="3.40.50.1010">
    <property type="entry name" value="5'-nuclease"/>
    <property type="match status" value="1"/>
</dbReference>
<dbReference type="HAMAP" id="MF_01192">
    <property type="entry name" value="Xni"/>
    <property type="match status" value="1"/>
</dbReference>
<dbReference type="InterPro" id="IPR020046">
    <property type="entry name" value="5-3_exonucl_a-hlix_arch_N"/>
</dbReference>
<dbReference type="InterPro" id="IPR002421">
    <property type="entry name" value="5-3_exonuclease"/>
</dbReference>
<dbReference type="InterPro" id="IPR036279">
    <property type="entry name" value="5-3_exonuclease_C_sf"/>
</dbReference>
<dbReference type="InterPro" id="IPR020045">
    <property type="entry name" value="DNA_polI_H3TH"/>
</dbReference>
<dbReference type="InterPro" id="IPR038969">
    <property type="entry name" value="FEN"/>
</dbReference>
<dbReference type="InterPro" id="IPR008918">
    <property type="entry name" value="HhH2"/>
</dbReference>
<dbReference type="InterPro" id="IPR029060">
    <property type="entry name" value="PIN-like_dom_sf"/>
</dbReference>
<dbReference type="InterPro" id="IPR022895">
    <property type="entry name" value="Xni"/>
</dbReference>
<dbReference type="NCBIfam" id="NF007017">
    <property type="entry name" value="PRK09482.1"/>
    <property type="match status" value="1"/>
</dbReference>
<dbReference type="PANTHER" id="PTHR42646:SF2">
    <property type="entry name" value="5'-3' EXONUCLEASE FAMILY PROTEIN"/>
    <property type="match status" value="1"/>
</dbReference>
<dbReference type="PANTHER" id="PTHR42646">
    <property type="entry name" value="FLAP ENDONUCLEASE XNI"/>
    <property type="match status" value="1"/>
</dbReference>
<dbReference type="Pfam" id="PF01367">
    <property type="entry name" value="5_3_exonuc"/>
    <property type="match status" value="1"/>
</dbReference>
<dbReference type="Pfam" id="PF02739">
    <property type="entry name" value="5_3_exonuc_N"/>
    <property type="match status" value="1"/>
</dbReference>
<dbReference type="SMART" id="SM00475">
    <property type="entry name" value="53EXOc"/>
    <property type="match status" value="1"/>
</dbReference>
<dbReference type="SMART" id="SM00279">
    <property type="entry name" value="HhH2"/>
    <property type="match status" value="1"/>
</dbReference>
<dbReference type="SUPFAM" id="SSF47807">
    <property type="entry name" value="5' to 3' exonuclease, C-terminal subdomain"/>
    <property type="match status" value="1"/>
</dbReference>
<dbReference type="SUPFAM" id="SSF88723">
    <property type="entry name" value="PIN domain-like"/>
    <property type="match status" value="1"/>
</dbReference>
<comment type="function">
    <text evidence="1">Has flap endonuclease activity. During DNA replication, flap endonucleases cleave the 5'-overhanging flap structure that is generated by displacement synthesis when DNA polymerase encounters the 5'-end of a downstream Okazaki fragment.</text>
</comment>
<comment type="cofactor">
    <cofactor evidence="1">
        <name>Mg(2+)</name>
        <dbReference type="ChEBI" id="CHEBI:18420"/>
    </cofactor>
    <text evidence="1">Binds 2 Mg(2+) per subunit. Only one magnesium ion has a direct interaction with the protein, the other interactions are indirect.</text>
</comment>
<comment type="cofactor">
    <cofactor evidence="1">
        <name>K(+)</name>
        <dbReference type="ChEBI" id="CHEBI:29103"/>
    </cofactor>
    <text evidence="1">Binds 1 K(+) per subunit. The potassium ion strongly increases the affinity for DNA.</text>
</comment>
<comment type="similarity">
    <text evidence="1">Belongs to the Xni family.</text>
</comment>